<evidence type="ECO:0000255" key="1">
    <source>
        <dbReference type="HAMAP-Rule" id="MF_00268"/>
    </source>
</evidence>
<comment type="function">
    <text evidence="1">Can catalyze the hydrolysis of ATP in the presence of single-stranded DNA, the ATP-dependent uptake of single-stranded DNA by duplex DNA, and the ATP-dependent hybridization of homologous single-stranded DNAs. It interacts with LexA causing its activation and leading to its autocatalytic cleavage.</text>
</comment>
<comment type="subcellular location">
    <subcellularLocation>
        <location evidence="1">Cytoplasm</location>
    </subcellularLocation>
</comment>
<comment type="similarity">
    <text evidence="1">Belongs to the RecA family.</text>
</comment>
<reference key="1">
    <citation type="journal article" date="2009" name="BMC Genomics">
        <title>Conservation in the face of diversity: multistrain analysis of an intracellular bacterium.</title>
        <authorList>
            <person name="Dark M.J."/>
            <person name="Herndon D.R."/>
            <person name="Kappmeyer L.S."/>
            <person name="Gonzales M.P."/>
            <person name="Nordeen E."/>
            <person name="Palmer G.H."/>
            <person name="Knowles D.P. Jr."/>
            <person name="Brayton K.A."/>
        </authorList>
    </citation>
    <scope>NUCLEOTIDE SEQUENCE [LARGE SCALE GENOMIC DNA]</scope>
    <source>
        <strain>Florida</strain>
    </source>
</reference>
<gene>
    <name evidence="1" type="primary">recA</name>
    <name type="ordered locus">AMF_061</name>
</gene>
<feature type="chain" id="PRO_1000193286" description="Protein RecA">
    <location>
        <begin position="1"/>
        <end position="359"/>
    </location>
</feature>
<feature type="binding site" evidence="1">
    <location>
        <begin position="74"/>
        <end position="81"/>
    </location>
    <ligand>
        <name>ATP</name>
        <dbReference type="ChEBI" id="CHEBI:30616"/>
    </ligand>
</feature>
<name>RECA_ANAMF</name>
<keyword id="KW-0067">ATP-binding</keyword>
<keyword id="KW-0963">Cytoplasm</keyword>
<keyword id="KW-0227">DNA damage</keyword>
<keyword id="KW-0233">DNA recombination</keyword>
<keyword id="KW-0234">DNA repair</keyword>
<keyword id="KW-0238">DNA-binding</keyword>
<keyword id="KW-0547">Nucleotide-binding</keyword>
<keyword id="KW-1185">Reference proteome</keyword>
<keyword id="KW-0742">SOS response</keyword>
<accession>B9KHJ1</accession>
<proteinExistence type="inferred from homology"/>
<dbReference type="EMBL" id="CP001079">
    <property type="protein sequence ID" value="ACM48953.1"/>
    <property type="molecule type" value="Genomic_DNA"/>
</dbReference>
<dbReference type="SMR" id="B9KHJ1"/>
<dbReference type="STRING" id="320483.AMF_061"/>
<dbReference type="KEGG" id="amf:AMF_061"/>
<dbReference type="eggNOG" id="COG0468">
    <property type="taxonomic scope" value="Bacteria"/>
</dbReference>
<dbReference type="HOGENOM" id="CLU_040469_3_2_5"/>
<dbReference type="Proteomes" id="UP000007307">
    <property type="component" value="Chromosome"/>
</dbReference>
<dbReference type="GO" id="GO:0005829">
    <property type="term" value="C:cytosol"/>
    <property type="evidence" value="ECO:0007669"/>
    <property type="project" value="TreeGrafter"/>
</dbReference>
<dbReference type="GO" id="GO:0005524">
    <property type="term" value="F:ATP binding"/>
    <property type="evidence" value="ECO:0007669"/>
    <property type="project" value="UniProtKB-UniRule"/>
</dbReference>
<dbReference type="GO" id="GO:0016887">
    <property type="term" value="F:ATP hydrolysis activity"/>
    <property type="evidence" value="ECO:0007669"/>
    <property type="project" value="InterPro"/>
</dbReference>
<dbReference type="GO" id="GO:0140664">
    <property type="term" value="F:ATP-dependent DNA damage sensor activity"/>
    <property type="evidence" value="ECO:0007669"/>
    <property type="project" value="InterPro"/>
</dbReference>
<dbReference type="GO" id="GO:0003684">
    <property type="term" value="F:damaged DNA binding"/>
    <property type="evidence" value="ECO:0007669"/>
    <property type="project" value="UniProtKB-UniRule"/>
</dbReference>
<dbReference type="GO" id="GO:0003697">
    <property type="term" value="F:single-stranded DNA binding"/>
    <property type="evidence" value="ECO:0007669"/>
    <property type="project" value="UniProtKB-UniRule"/>
</dbReference>
<dbReference type="GO" id="GO:0006310">
    <property type="term" value="P:DNA recombination"/>
    <property type="evidence" value="ECO:0007669"/>
    <property type="project" value="UniProtKB-UniRule"/>
</dbReference>
<dbReference type="GO" id="GO:0006281">
    <property type="term" value="P:DNA repair"/>
    <property type="evidence" value="ECO:0007669"/>
    <property type="project" value="UniProtKB-UniRule"/>
</dbReference>
<dbReference type="GO" id="GO:0009432">
    <property type="term" value="P:SOS response"/>
    <property type="evidence" value="ECO:0007669"/>
    <property type="project" value="UniProtKB-UniRule"/>
</dbReference>
<dbReference type="CDD" id="cd00983">
    <property type="entry name" value="RecA"/>
    <property type="match status" value="1"/>
</dbReference>
<dbReference type="FunFam" id="3.40.50.300:FF:000087">
    <property type="entry name" value="Recombinase RecA"/>
    <property type="match status" value="1"/>
</dbReference>
<dbReference type="Gene3D" id="3.40.50.300">
    <property type="entry name" value="P-loop containing nucleotide triphosphate hydrolases"/>
    <property type="match status" value="1"/>
</dbReference>
<dbReference type="HAMAP" id="MF_00268">
    <property type="entry name" value="RecA"/>
    <property type="match status" value="1"/>
</dbReference>
<dbReference type="InterPro" id="IPR003593">
    <property type="entry name" value="AAA+_ATPase"/>
</dbReference>
<dbReference type="InterPro" id="IPR013765">
    <property type="entry name" value="DNA_recomb/repair_RecA"/>
</dbReference>
<dbReference type="InterPro" id="IPR020584">
    <property type="entry name" value="DNA_recomb/repair_RecA_CS"/>
</dbReference>
<dbReference type="InterPro" id="IPR027417">
    <property type="entry name" value="P-loop_NTPase"/>
</dbReference>
<dbReference type="InterPro" id="IPR049261">
    <property type="entry name" value="RecA-like_C"/>
</dbReference>
<dbReference type="InterPro" id="IPR049428">
    <property type="entry name" value="RecA-like_N"/>
</dbReference>
<dbReference type="InterPro" id="IPR020588">
    <property type="entry name" value="RecA_ATP-bd"/>
</dbReference>
<dbReference type="InterPro" id="IPR023400">
    <property type="entry name" value="RecA_C_sf"/>
</dbReference>
<dbReference type="InterPro" id="IPR020587">
    <property type="entry name" value="RecA_monomer-monomer_interface"/>
</dbReference>
<dbReference type="NCBIfam" id="TIGR02012">
    <property type="entry name" value="tigrfam_recA"/>
    <property type="match status" value="1"/>
</dbReference>
<dbReference type="PANTHER" id="PTHR45900:SF1">
    <property type="entry name" value="MITOCHONDRIAL DNA REPAIR PROTEIN RECA HOMOLOG-RELATED"/>
    <property type="match status" value="1"/>
</dbReference>
<dbReference type="PANTHER" id="PTHR45900">
    <property type="entry name" value="RECA"/>
    <property type="match status" value="1"/>
</dbReference>
<dbReference type="Pfam" id="PF00154">
    <property type="entry name" value="RecA"/>
    <property type="match status" value="1"/>
</dbReference>
<dbReference type="Pfam" id="PF21096">
    <property type="entry name" value="RecA_C"/>
    <property type="match status" value="1"/>
</dbReference>
<dbReference type="PRINTS" id="PR00142">
    <property type="entry name" value="RECA"/>
</dbReference>
<dbReference type="SMART" id="SM00382">
    <property type="entry name" value="AAA"/>
    <property type="match status" value="1"/>
</dbReference>
<dbReference type="SUPFAM" id="SSF52540">
    <property type="entry name" value="P-loop containing nucleoside triphosphate hydrolases"/>
    <property type="match status" value="1"/>
</dbReference>
<dbReference type="SUPFAM" id="SSF54752">
    <property type="entry name" value="RecA protein, C-terminal domain"/>
    <property type="match status" value="1"/>
</dbReference>
<dbReference type="PROSITE" id="PS00321">
    <property type="entry name" value="RECA_1"/>
    <property type="match status" value="1"/>
</dbReference>
<dbReference type="PROSITE" id="PS50162">
    <property type="entry name" value="RECA_2"/>
    <property type="match status" value="1"/>
</dbReference>
<dbReference type="PROSITE" id="PS50163">
    <property type="entry name" value="RECA_3"/>
    <property type="match status" value="1"/>
</dbReference>
<protein>
    <recommendedName>
        <fullName evidence="1">Protein RecA</fullName>
    </recommendedName>
    <alternativeName>
        <fullName evidence="1">Recombinase A</fullName>
    </alternativeName>
</protein>
<sequence>MSMSGSKKDVESEKQKALDAAISQIERAFGRGAIMKLKQHPAEKMDSVSTGSIALDAALGIGGLPKGRIVEIFGPESSGKTTLALHVIAEAQKQGGNCAFIDAEHALDTVYARKLGVNVGDLIVSQPDTGEQALHIVEYLVCSGAIDVIVVDSVAALTPRAEIEGDMGDQHMGLQARLLSHALRKLTSVVSKANCILVFINQIRIKIGVIYGNPEVTTGGSALKFYTSIRLDIRKVSAIKDKDNVIGNQTRVKVVKNKVAPPFKQAEFDIVYNEGISKLGEIVDMGVKFGFVEKSGAHYSYGAVKLGQGRENAKGYLKSNPDIANELEQKIRACLAESMHSSDLFAVDERTDVLEEEVF</sequence>
<organism>
    <name type="scientific">Anaplasma marginale (strain Florida)</name>
    <dbReference type="NCBI Taxonomy" id="320483"/>
    <lineage>
        <taxon>Bacteria</taxon>
        <taxon>Pseudomonadati</taxon>
        <taxon>Pseudomonadota</taxon>
        <taxon>Alphaproteobacteria</taxon>
        <taxon>Rickettsiales</taxon>
        <taxon>Anaplasmataceae</taxon>
        <taxon>Anaplasma</taxon>
    </lineage>
</organism>